<sequence length="538" mass="59513">MLDSLVSKLPSLSTSDHASVVALNLFVALLCACIVLGHLLEENRWMNESITALLIGLGTGVTILLISKGKSSHLLVFSEDLFFIYLLPPIIFNAGFQVKKKQFFRNFVTIMLFGAVGTIISCTIISLGVTQFFKKLDIGTFDLGDYLAIGAIFAATDSVCTLQVLNQDETPLLYSLVFGEGVVNDATSVVVFNAIQSFDLTHLNHEAAFHLLGNFLYLFLLSTLLGAATGLISAYVIKKLYFGRHSTDREVALMMLMAYLSYMLAELFDLSGILTVFFCGIVMSHYTWHNVTESSRITTKHTFATLSFLAETFIFLYVGMDALDIDKWRSVSDTPGTSIAVSSILMGLVMVGRAAFVFPLSFLSNLAKKNQSEKINFNMQVVIWWSGLMRGAVSMALAYNKFTRAGHTDVRGNAIMITSTITVCLFSTVVFGMLTKPLISYLLPHQNATTSMLSDDNTPKSIHIPLLDQDSFIEPSGNHNVPRPDSIRGFLTRPTRTVHYYWRQFDDSFMRPVFGGRGFVPFVPGSPTERNPPDLSKA</sequence>
<organism>
    <name type="scientific">Arabidopsis thaliana</name>
    <name type="common">Mouse-ear cress</name>
    <dbReference type="NCBI Taxonomy" id="3702"/>
    <lineage>
        <taxon>Eukaryota</taxon>
        <taxon>Viridiplantae</taxon>
        <taxon>Streptophyta</taxon>
        <taxon>Embryophyta</taxon>
        <taxon>Tracheophyta</taxon>
        <taxon>Spermatophyta</taxon>
        <taxon>Magnoliopsida</taxon>
        <taxon>eudicotyledons</taxon>
        <taxon>Gunneridae</taxon>
        <taxon>Pentapetalae</taxon>
        <taxon>rosids</taxon>
        <taxon>malvids</taxon>
        <taxon>Brassicales</taxon>
        <taxon>Brassicaceae</taxon>
        <taxon>Camelineae</taxon>
        <taxon>Arabidopsis</taxon>
    </lineage>
</organism>
<name>NHX1_ARATH</name>
<gene>
    <name type="primary">NHX1</name>
    <name type="ordered locus">At5g27150</name>
    <name type="ORF">T21B4.60</name>
</gene>
<protein>
    <recommendedName>
        <fullName>Sodium/hydrogen exchanger 1</fullName>
    </recommendedName>
    <alternativeName>
        <fullName>Na(+)/H(+) exchanger 1</fullName>
        <shortName>NHE-1</shortName>
    </alternativeName>
</protein>
<evidence type="ECO:0000255" key="1"/>
<evidence type="ECO:0000269" key="2">
    <source>
    </source>
</evidence>
<evidence type="ECO:0000269" key="3">
    <source>
    </source>
</evidence>
<evidence type="ECO:0000269" key="4">
    <source>
    </source>
</evidence>
<evidence type="ECO:0000269" key="5">
    <source>
    </source>
</evidence>
<evidence type="ECO:0000269" key="6">
    <source>
    </source>
</evidence>
<evidence type="ECO:0000269" key="7">
    <source>
    </source>
</evidence>
<evidence type="ECO:0000269" key="8">
    <source>
    </source>
</evidence>
<evidence type="ECO:0000269" key="9">
    <source>
    </source>
</evidence>
<evidence type="ECO:0000269" key="10">
    <source>
    </source>
</evidence>
<evidence type="ECO:0000269" key="11">
    <source>
    </source>
</evidence>
<evidence type="ECO:0000269" key="12">
    <source>
    </source>
</evidence>
<evidence type="ECO:0000269" key="13">
    <source>
    </source>
</evidence>
<evidence type="ECO:0000305" key="14"/>
<evidence type="ECO:0000305" key="15">
    <source>
    </source>
</evidence>
<comment type="function">
    <text evidence="2 3 4 5 6 10 11 13">Acts in low affinity electroneutral exchange of protons for cations such as Na(+) or K(+) across membranes. Can also exchange Li(+) and Cs(+) with a lower affinity. Involved in vacuolar ion compartmentalization necessary for cell volume regulation and cytoplasmic Na(+) detoxification. Required during leaves expansion, probably to stimulate epidermal cell expansion. Confers competence to grow in high salinity conditions.</text>
</comment>
<comment type="catalytic activity">
    <reaction evidence="6">
        <text>Na(+)(in) + H(+)(out) = Na(+)(out) + H(+)(in)</text>
        <dbReference type="Rhea" id="RHEA:29419"/>
        <dbReference type="ChEBI" id="CHEBI:15378"/>
        <dbReference type="ChEBI" id="CHEBI:29101"/>
    </reaction>
</comment>
<comment type="catalytic activity">
    <reaction evidence="6">
        <text>K(+)(in) + H(+)(out) = K(+)(out) + H(+)(in)</text>
        <dbReference type="Rhea" id="RHEA:29467"/>
        <dbReference type="ChEBI" id="CHEBI:15378"/>
        <dbReference type="ChEBI" id="CHEBI:29103"/>
    </reaction>
</comment>
<comment type="biophysicochemical properties">
    <kinetics>
        <KM evidence="9 12">24 mM for Na(+) (without CML18/CAM15)</KM>
        <KM evidence="9 12">15 mM for Na(+) (in presence of CML18/CAM15)</KM>
        <KM evidence="9 12">12 mM for K(+) (without CML18/CAM15)</KM>
        <KM evidence="9 12">17 mM for K(+) (in presence of CML18/CAM15)</KM>
    </kinetics>
</comment>
<comment type="subunit">
    <text>Calcium and pH-dependent interaction with CML18/CAM15 (increases when pH decreases, better at pH 5.5 than at pH 7.5).</text>
</comment>
<comment type="subcellular location">
    <subcellularLocation>
        <location evidence="2">Vacuole membrane</location>
        <topology evidence="2">Multi-pass membrane protein</topology>
    </subcellularLocation>
    <subcellularLocation>
        <location evidence="15">Endoplasmic reticulum membrane</location>
        <topology evidence="15">Multi-pass membrane protein</topology>
    </subcellularLocation>
    <subcellularLocation>
        <location evidence="15">Golgi apparatus membrane</location>
        <topology evidence="15">Multi-pass membrane protein</topology>
    </subcellularLocation>
    <text>Tonoplast. Possibly also present in endoplasmic reticulum (ER) and Golgi apparatus.</text>
</comment>
<comment type="tissue specificity">
    <text evidence="3 7 8 10">Ubiquitous, with higher levels around vascular tissues and guard cells.</text>
</comment>
<comment type="developmental stage">
    <text evidence="8 10">Present in flowers, particularly in petals, stamens and anthers (including pollen). Slightly expressed in developing ovaries, strongly expressed in developing embryos and in siliques outer integuments (mostly in base and tips). During first days after germination, mainly localized in roots, including root tips. Later, ubiquitous except in root tips.</text>
</comment>
<comment type="induction">
    <text evidence="3 7 8 13">Induced by NaCl, KCl and sorbitol in a ABA-dependent but SOS signaling-independent manner. Also induced by abscisic acid (ABA).</text>
</comment>
<comment type="biotechnology">
    <text evidence="5 11">Transgenic plants of agricultural interest (e.g. cotton, Brassica napus) that overexpress NHX1 have enhanced capability to grow on high saline soils.</text>
</comment>
<comment type="miscellaneous">
    <text>Inhibition of Na(+) transport activity but not of K(+) transport activity is mediated by binding with CML18/CAM15. Inhibited by the diuretic compound amiloride and its analogs ethylisopropyl-amiloride (EIPA), 5-(N-ethyl-N-isopropyl)amiloride (MIA), and benzamil. Also down-regulated by quinine.</text>
</comment>
<comment type="similarity">
    <text evidence="14">Belongs to the monovalent cation:proton antiporter 1 (CPA1) transporter (TC 2.A.36) family.</text>
</comment>
<comment type="sequence caution" evidence="14">
    <conflict type="erroneous gene model prediction">
        <sequence resource="EMBL-CDS" id="AAB61069"/>
    </conflict>
</comment>
<keyword id="KW-0050">Antiport</keyword>
<keyword id="KW-0112">Calmodulin-binding</keyword>
<keyword id="KW-0256">Endoplasmic reticulum</keyword>
<keyword id="KW-0325">Glycoprotein</keyword>
<keyword id="KW-0333">Golgi apparatus</keyword>
<keyword id="KW-0406">Ion transport</keyword>
<keyword id="KW-0472">Membrane</keyword>
<keyword id="KW-0630">Potassium</keyword>
<keyword id="KW-0633">Potassium transport</keyword>
<keyword id="KW-1185">Reference proteome</keyword>
<keyword id="KW-0915">Sodium</keyword>
<keyword id="KW-0739">Sodium transport</keyword>
<keyword id="KW-0812">Transmembrane</keyword>
<keyword id="KW-1133">Transmembrane helix</keyword>
<keyword id="KW-0813">Transport</keyword>
<keyword id="KW-0926">Vacuole</keyword>
<dbReference type="EMBL" id="AF106324">
    <property type="protein sequence ID" value="AAD16946.1"/>
    <property type="molecule type" value="mRNA"/>
</dbReference>
<dbReference type="EMBL" id="AF056190">
    <property type="protein sequence ID" value="AAF21755.1"/>
    <property type="molecule type" value="mRNA"/>
</dbReference>
<dbReference type="EMBL" id="AF510074">
    <property type="protein sequence ID" value="AAM34759.1"/>
    <property type="molecule type" value="mRNA"/>
</dbReference>
<dbReference type="EMBL" id="AY685183">
    <property type="protein sequence ID" value="AAT95387.1"/>
    <property type="molecule type" value="mRNA"/>
</dbReference>
<dbReference type="EMBL" id="AF007271">
    <property type="protein sequence ID" value="AAB61069.1"/>
    <property type="status" value="ALT_SEQ"/>
    <property type="molecule type" value="Genomic_DNA"/>
</dbReference>
<dbReference type="EMBL" id="CP002688">
    <property type="protein sequence ID" value="AED93655.1"/>
    <property type="molecule type" value="Genomic_DNA"/>
</dbReference>
<dbReference type="PIR" id="T01804">
    <property type="entry name" value="T01804"/>
</dbReference>
<dbReference type="RefSeq" id="NP_198067.1">
    <property type="nucleotide sequence ID" value="NM_122597.3"/>
</dbReference>
<dbReference type="SMR" id="Q68KI4"/>
<dbReference type="BioGRID" id="18047">
    <property type="interactions" value="6"/>
</dbReference>
<dbReference type="FunCoup" id="Q68KI4">
    <property type="interactions" value="91"/>
</dbReference>
<dbReference type="IntAct" id="Q68KI4">
    <property type="interactions" value="3"/>
</dbReference>
<dbReference type="STRING" id="3702.Q68KI4"/>
<dbReference type="TCDB" id="2.A.36.5.1">
    <property type="family name" value="the monovalent cation:proton antiporter-1 (cpa1) family"/>
</dbReference>
<dbReference type="GlyCosmos" id="Q68KI4">
    <property type="glycosylation" value="3 sites, No reported glycans"/>
</dbReference>
<dbReference type="GlyGen" id="Q68KI4">
    <property type="glycosylation" value="3 sites"/>
</dbReference>
<dbReference type="iPTMnet" id="Q68KI4"/>
<dbReference type="PaxDb" id="3702-AT5G27150.1"/>
<dbReference type="ProteomicsDB" id="250532"/>
<dbReference type="EnsemblPlants" id="AT5G27150.1">
    <property type="protein sequence ID" value="AT5G27150.1"/>
    <property type="gene ID" value="AT5G27150"/>
</dbReference>
<dbReference type="GeneID" id="832773"/>
<dbReference type="Gramene" id="AT5G27150.1">
    <property type="protein sequence ID" value="AT5G27150.1"/>
    <property type="gene ID" value="AT5G27150"/>
</dbReference>
<dbReference type="KEGG" id="ath:AT5G27150"/>
<dbReference type="Araport" id="AT5G27150"/>
<dbReference type="TAIR" id="AT5G27150">
    <property type="gene designation" value="NHX1"/>
</dbReference>
<dbReference type="eggNOG" id="KOG1965">
    <property type="taxonomic scope" value="Eukaryota"/>
</dbReference>
<dbReference type="HOGENOM" id="CLU_005912_11_2_1"/>
<dbReference type="InParanoid" id="Q68KI4"/>
<dbReference type="OMA" id="APSHKVH"/>
<dbReference type="OrthoDB" id="196264at2759"/>
<dbReference type="PhylomeDB" id="Q68KI4"/>
<dbReference type="SABIO-RK" id="Q68KI4"/>
<dbReference type="PRO" id="PR:Q68KI4"/>
<dbReference type="Proteomes" id="UP000006548">
    <property type="component" value="Chromosome 5"/>
</dbReference>
<dbReference type="ExpressionAtlas" id="Q68KI4">
    <property type="expression patterns" value="baseline and differential"/>
</dbReference>
<dbReference type="GO" id="GO:0005789">
    <property type="term" value="C:endoplasmic reticulum membrane"/>
    <property type="evidence" value="ECO:0007669"/>
    <property type="project" value="UniProtKB-SubCell"/>
</dbReference>
<dbReference type="GO" id="GO:0000139">
    <property type="term" value="C:Golgi membrane"/>
    <property type="evidence" value="ECO:0007669"/>
    <property type="project" value="UniProtKB-SubCell"/>
</dbReference>
<dbReference type="GO" id="GO:0000325">
    <property type="term" value="C:plant-type vacuole"/>
    <property type="evidence" value="ECO:0000304"/>
    <property type="project" value="TAIR"/>
</dbReference>
<dbReference type="GO" id="GO:0005886">
    <property type="term" value="C:plasma membrane"/>
    <property type="evidence" value="ECO:0007005"/>
    <property type="project" value="TAIR"/>
</dbReference>
<dbReference type="GO" id="GO:0009536">
    <property type="term" value="C:plastid"/>
    <property type="evidence" value="ECO:0007005"/>
    <property type="project" value="TAIR"/>
</dbReference>
<dbReference type="GO" id="GO:0005774">
    <property type="term" value="C:vacuolar membrane"/>
    <property type="evidence" value="ECO:0007669"/>
    <property type="project" value="UniProtKB-SubCell"/>
</dbReference>
<dbReference type="GO" id="GO:0005773">
    <property type="term" value="C:vacuole"/>
    <property type="evidence" value="ECO:0000314"/>
    <property type="project" value="TAIR"/>
</dbReference>
<dbReference type="GO" id="GO:0005516">
    <property type="term" value="F:calmodulin binding"/>
    <property type="evidence" value="ECO:0007669"/>
    <property type="project" value="UniProtKB-KW"/>
</dbReference>
<dbReference type="GO" id="GO:0015385">
    <property type="term" value="F:sodium:proton antiporter activity"/>
    <property type="evidence" value="ECO:0000314"/>
    <property type="project" value="TAIR"/>
</dbReference>
<dbReference type="GO" id="GO:0048366">
    <property type="term" value="P:leaf development"/>
    <property type="evidence" value="ECO:0000315"/>
    <property type="project" value="TAIR"/>
</dbReference>
<dbReference type="GO" id="GO:0055075">
    <property type="term" value="P:potassium ion homeostasis"/>
    <property type="evidence" value="ECO:0000316"/>
    <property type="project" value="TAIR"/>
</dbReference>
<dbReference type="GO" id="GO:0006813">
    <property type="term" value="P:potassium ion transport"/>
    <property type="evidence" value="ECO:0007669"/>
    <property type="project" value="UniProtKB-KW"/>
</dbReference>
<dbReference type="GO" id="GO:0006885">
    <property type="term" value="P:regulation of pH"/>
    <property type="evidence" value="ECO:0007669"/>
    <property type="project" value="InterPro"/>
</dbReference>
<dbReference type="GO" id="GO:0090333">
    <property type="term" value="P:regulation of stomatal closure"/>
    <property type="evidence" value="ECO:0000316"/>
    <property type="project" value="TAIR"/>
</dbReference>
<dbReference type="GO" id="GO:0009651">
    <property type="term" value="P:response to salt stress"/>
    <property type="evidence" value="ECO:0000315"/>
    <property type="project" value="TAIR"/>
</dbReference>
<dbReference type="Gene3D" id="6.10.140.1330">
    <property type="match status" value="1"/>
</dbReference>
<dbReference type="InterPro" id="IPR018422">
    <property type="entry name" value="Cation/H_exchanger_CPA1"/>
</dbReference>
<dbReference type="InterPro" id="IPR006153">
    <property type="entry name" value="Cation/H_exchanger_TM"/>
</dbReference>
<dbReference type="InterPro" id="IPR004709">
    <property type="entry name" value="NaH_exchanger"/>
</dbReference>
<dbReference type="NCBIfam" id="TIGR00840">
    <property type="entry name" value="b_cpa1"/>
    <property type="match status" value="1"/>
</dbReference>
<dbReference type="PANTHER" id="PTHR10110">
    <property type="entry name" value="SODIUM/HYDROGEN EXCHANGER"/>
    <property type="match status" value="1"/>
</dbReference>
<dbReference type="PANTHER" id="PTHR10110:SF163">
    <property type="entry name" value="SODIUM_HYDROGEN EXCHANGER 1"/>
    <property type="match status" value="1"/>
</dbReference>
<dbReference type="Pfam" id="PF00999">
    <property type="entry name" value="Na_H_Exchanger"/>
    <property type="match status" value="1"/>
</dbReference>
<dbReference type="PRINTS" id="PR01084">
    <property type="entry name" value="NAHEXCHNGR"/>
</dbReference>
<accession>Q68KI4</accession>
<accession>O04655</accession>
<accession>Q8LRL1</accession>
<accession>Q9ZPK3</accession>
<feature type="chain" id="PRO_0000052372" description="Sodium/hydrogen exchanger 1">
    <location>
        <begin position="1"/>
        <end position="538"/>
    </location>
</feature>
<feature type="topological domain" description="Cytoplasmic" evidence="1">
    <location>
        <begin position="1"/>
        <end position="19"/>
    </location>
</feature>
<feature type="transmembrane region" description="Helical" evidence="1">
    <location>
        <begin position="20"/>
        <end position="40"/>
    </location>
</feature>
<feature type="topological domain" description="Vacuolar" evidence="1">
    <location>
        <begin position="41"/>
        <end position="45"/>
    </location>
</feature>
<feature type="transmembrane region" description="Helical" evidence="1">
    <location>
        <begin position="46"/>
        <end position="66"/>
    </location>
</feature>
<feature type="topological domain" description="Cytoplasmic" evidence="1">
    <location>
        <begin position="67"/>
        <end position="73"/>
    </location>
</feature>
<feature type="intramembrane region" description="Helical" evidence="1">
    <location>
        <begin position="74"/>
        <end position="94"/>
    </location>
</feature>
<feature type="topological domain" description="Cytoplasmic" evidence="1">
    <location>
        <begin position="95"/>
        <end position="106"/>
    </location>
</feature>
<feature type="transmembrane region" description="Helical" evidence="1">
    <location>
        <begin position="107"/>
        <end position="127"/>
    </location>
</feature>
<feature type="topological domain" description="Vacuolar" evidence="1">
    <location>
        <begin position="128"/>
        <end position="146"/>
    </location>
</feature>
<feature type="intramembrane region" description="Helical" evidence="1">
    <location>
        <begin position="147"/>
        <end position="166"/>
    </location>
</feature>
<feature type="intramembrane region" description="Helical" evidence="1">
    <location>
        <begin position="172"/>
        <end position="192"/>
    </location>
</feature>
<feature type="topological domain" description="Vacuolar" evidence="1">
    <location>
        <begin position="193"/>
        <end position="216"/>
    </location>
</feature>
<feature type="transmembrane region" description="Helical" evidence="1">
    <location>
        <begin position="217"/>
        <end position="237"/>
    </location>
</feature>
<feature type="topological domain" description="Cytoplasmic" evidence="1">
    <location>
        <begin position="238"/>
        <end position="262"/>
    </location>
</feature>
<feature type="transmembrane region" description="Helical" evidence="1">
    <location>
        <begin position="263"/>
        <end position="283"/>
    </location>
</feature>
<feature type="topological domain" description="Vacuolar" evidence="1">
    <location>
        <begin position="284"/>
        <end position="302"/>
    </location>
</feature>
<feature type="transmembrane region" description="Helical" evidence="1">
    <location>
        <begin position="303"/>
        <end position="323"/>
    </location>
</feature>
<feature type="topological domain" description="Cytoplasmic" evidence="1">
    <location>
        <begin position="324"/>
        <end position="342"/>
    </location>
</feature>
<feature type="transmembrane region" description="Helical" evidence="1">
    <location>
        <begin position="343"/>
        <end position="363"/>
    </location>
</feature>
<feature type="topological domain" description="Vacuolar" evidence="1">
    <location>
        <begin position="364"/>
        <end position="378"/>
    </location>
</feature>
<feature type="transmembrane region" description="Helical" evidence="1">
    <location>
        <begin position="379"/>
        <end position="399"/>
    </location>
</feature>
<feature type="topological domain" description="Cytoplasmic" evidence="1">
    <location>
        <begin position="400"/>
        <end position="413"/>
    </location>
</feature>
<feature type="transmembrane region" description="Helical" evidence="1">
    <location>
        <begin position="414"/>
        <end position="434"/>
    </location>
</feature>
<feature type="topological domain" description="Vacuolar" evidence="1">
    <location>
        <begin position="435"/>
        <end position="538"/>
    </location>
</feature>
<feature type="region of interest" description="Interaction with CML18/CAM15">
    <location>
        <begin position="496"/>
        <end position="518"/>
    </location>
</feature>
<feature type="glycosylation site" description="N-linked (GlcNAc...) asparagine" evidence="1">
    <location>
        <position position="290"/>
    </location>
</feature>
<feature type="glycosylation site" description="N-linked (GlcNAc...) asparagine" evidence="1">
    <location>
        <position position="370"/>
    </location>
</feature>
<feature type="glycosylation site" description="N-linked (GlcNAc...) asparagine" evidence="1">
    <location>
        <position position="447"/>
    </location>
</feature>
<feature type="sequence conflict" description="In Ref. 4; AAT95387." evidence="14" ref="4">
    <original>E</original>
    <variation>K</variation>
    <location>
        <position position="41"/>
    </location>
</feature>
<feature type="sequence conflict" description="In Ref. 3; AAM34759." evidence="14" ref="3">
    <original>G</original>
    <variation>S</variation>
    <location>
        <position position="60"/>
    </location>
</feature>
<feature type="sequence conflict" description="In Ref. 3; AAM34759." evidence="14" ref="3">
    <original>L</original>
    <variation>M</variation>
    <location>
        <position position="143"/>
    </location>
</feature>
<feature type="sequence conflict" description="In Ref. 4; AAT95387." evidence="14" ref="4">
    <original>R</original>
    <variation>Q</variation>
    <location>
        <position position="483"/>
    </location>
</feature>
<reference key="1">
    <citation type="journal article" date="1999" name="Proc. Natl. Acad. Sci. U.S.A.">
        <title>The Arabidopsis thaliana proton transporters, AtNhx1 and Avp1, can function in cation detoxification in yeast.</title>
        <authorList>
            <person name="Gaxiola R.A."/>
            <person name="Rao R."/>
            <person name="Sherman A."/>
            <person name="Grisafi P."/>
            <person name="Alper S.L."/>
            <person name="Fink G.R."/>
        </authorList>
    </citation>
    <scope>NUCLEOTIDE SEQUENCE [MRNA]</scope>
    <scope>FUNCTION</scope>
    <scope>INDUCTION</scope>
    <source>
        <strain>cv. Columbia</strain>
    </source>
</reference>
<reference key="2">
    <citation type="journal article" date="2000" name="FEBS Lett.">
        <title>Functional conservation between yeast and plant endosomal Na(+)/H(+) antiporters.</title>
        <authorList>
            <person name="Quintero F.J."/>
            <person name="Blatt M.R."/>
            <person name="Pardo J.M."/>
        </authorList>
    </citation>
    <scope>NUCLEOTIDE SEQUENCE [MRNA]</scope>
    <scope>FUNCTION</scope>
    <scope>TISSUE SPECIFICITY</scope>
    <scope>INDUCTION</scope>
</reference>
<reference key="3">
    <citation type="submission" date="2002-05" db="EMBL/GenBank/DDBJ databases">
        <title>Isolation and characterization of a Na(+)/H(+) antiporter gene from Arabidopsis.</title>
        <authorList>
            <person name="Baek S.H."/>
            <person name="Kim H.S."/>
            <person name="Lee Y.T."/>
            <person name="Lee M.H."/>
            <person name="Yun S.J."/>
        </authorList>
    </citation>
    <scope>NUCLEOTIDE SEQUENCE [MRNA]</scope>
</reference>
<reference key="4">
    <citation type="submission" date="2004-07" db="EMBL/GenBank/DDBJ databases">
        <authorList>
            <person name="Wang D."/>
            <person name="Zhang J.L."/>
            <person name="Zhang J.W."/>
        </authorList>
    </citation>
    <scope>NUCLEOTIDE SEQUENCE [MRNA]</scope>
</reference>
<reference key="5">
    <citation type="journal article" date="2000" name="Nature">
        <title>Sequence and analysis of chromosome 5 of the plant Arabidopsis thaliana.</title>
        <authorList>
            <person name="Tabata S."/>
            <person name="Kaneko T."/>
            <person name="Nakamura Y."/>
            <person name="Kotani H."/>
            <person name="Kato T."/>
            <person name="Asamizu E."/>
            <person name="Miyajima N."/>
            <person name="Sasamoto S."/>
            <person name="Kimura T."/>
            <person name="Hosouchi T."/>
            <person name="Kawashima K."/>
            <person name="Kohara M."/>
            <person name="Matsumoto M."/>
            <person name="Matsuno A."/>
            <person name="Muraki A."/>
            <person name="Nakayama S."/>
            <person name="Nakazaki N."/>
            <person name="Naruo K."/>
            <person name="Okumura S."/>
            <person name="Shinpo S."/>
            <person name="Takeuchi C."/>
            <person name="Wada T."/>
            <person name="Watanabe A."/>
            <person name="Yamada M."/>
            <person name="Yasuda M."/>
            <person name="Sato S."/>
            <person name="de la Bastide M."/>
            <person name="Huang E."/>
            <person name="Spiegel L."/>
            <person name="Gnoj L."/>
            <person name="O'Shaughnessy A."/>
            <person name="Preston R."/>
            <person name="Habermann K."/>
            <person name="Murray J."/>
            <person name="Johnson D."/>
            <person name="Rohlfing T."/>
            <person name="Nelson J."/>
            <person name="Stoneking T."/>
            <person name="Pepin K."/>
            <person name="Spieth J."/>
            <person name="Sekhon M."/>
            <person name="Armstrong J."/>
            <person name="Becker M."/>
            <person name="Belter E."/>
            <person name="Cordum H."/>
            <person name="Cordes M."/>
            <person name="Courtney L."/>
            <person name="Courtney W."/>
            <person name="Dante M."/>
            <person name="Du H."/>
            <person name="Edwards J."/>
            <person name="Fryman J."/>
            <person name="Haakensen B."/>
            <person name="Lamar E."/>
            <person name="Latreille P."/>
            <person name="Leonard S."/>
            <person name="Meyer R."/>
            <person name="Mulvaney E."/>
            <person name="Ozersky P."/>
            <person name="Riley A."/>
            <person name="Strowmatt C."/>
            <person name="Wagner-McPherson C."/>
            <person name="Wollam A."/>
            <person name="Yoakum M."/>
            <person name="Bell M."/>
            <person name="Dedhia N."/>
            <person name="Parnell L."/>
            <person name="Shah R."/>
            <person name="Rodriguez M."/>
            <person name="Hoon See L."/>
            <person name="Vil D."/>
            <person name="Baker J."/>
            <person name="Kirchoff K."/>
            <person name="Toth K."/>
            <person name="King L."/>
            <person name="Bahret A."/>
            <person name="Miller B."/>
            <person name="Marra M.A."/>
            <person name="Martienssen R."/>
            <person name="McCombie W.R."/>
            <person name="Wilson R.K."/>
            <person name="Murphy G."/>
            <person name="Bancroft I."/>
            <person name="Volckaert G."/>
            <person name="Wambutt R."/>
            <person name="Duesterhoeft A."/>
            <person name="Stiekema W."/>
            <person name="Pohl T."/>
            <person name="Entian K.-D."/>
            <person name="Terryn N."/>
            <person name="Hartley N."/>
            <person name="Bent E."/>
            <person name="Johnson S."/>
            <person name="Langham S.-A."/>
            <person name="McCullagh B."/>
            <person name="Robben J."/>
            <person name="Grymonprez B."/>
            <person name="Zimmermann W."/>
            <person name="Ramsperger U."/>
            <person name="Wedler H."/>
            <person name="Balke K."/>
            <person name="Wedler E."/>
            <person name="Peters S."/>
            <person name="van Staveren M."/>
            <person name="Dirkse W."/>
            <person name="Mooijman P."/>
            <person name="Klein Lankhorst R."/>
            <person name="Weitzenegger T."/>
            <person name="Bothe G."/>
            <person name="Rose M."/>
            <person name="Hauf J."/>
            <person name="Berneiser S."/>
            <person name="Hempel S."/>
            <person name="Feldpausch M."/>
            <person name="Lamberth S."/>
            <person name="Villarroel R."/>
            <person name="Gielen J."/>
            <person name="Ardiles W."/>
            <person name="Bents O."/>
            <person name="Lemcke K."/>
            <person name="Kolesov G."/>
            <person name="Mayer K.F.X."/>
            <person name="Rudd S."/>
            <person name="Schoof H."/>
            <person name="Schueller C."/>
            <person name="Zaccaria P."/>
            <person name="Mewes H.-W."/>
            <person name="Bevan M."/>
            <person name="Fransz P.F."/>
        </authorList>
    </citation>
    <scope>NUCLEOTIDE SEQUENCE [LARGE SCALE GENOMIC DNA]</scope>
    <source>
        <strain>cv. Columbia</strain>
    </source>
</reference>
<reference key="6">
    <citation type="journal article" date="2017" name="Plant J.">
        <title>Araport11: a complete reannotation of the Arabidopsis thaliana reference genome.</title>
        <authorList>
            <person name="Cheng C.Y."/>
            <person name="Krishnakumar V."/>
            <person name="Chan A.P."/>
            <person name="Thibaud-Nissen F."/>
            <person name="Schobel S."/>
            <person name="Town C.D."/>
        </authorList>
    </citation>
    <scope>GENOME REANNOTATION</scope>
    <source>
        <strain>cv. Columbia</strain>
    </source>
</reference>
<reference key="7">
    <citation type="journal article" date="1999" name="Science">
        <title>Salt tolerance conferred by overexpression of a vacuolar Na(+)/H(+) antiport in Arabidopsis.</title>
        <authorList>
            <person name="Apse M.P."/>
            <person name="Aharon G.S."/>
            <person name="Snedden W.A."/>
            <person name="Blumwald E."/>
        </authorList>
    </citation>
    <scope>FUNCTION</scope>
    <scope>SUBCELLULAR LOCATION</scope>
</reference>
<reference key="8">
    <citation type="journal article" date="2000" name="Biochem. J.">
        <title>Arabidopsis thaliana and Saccharomyces cerevisiae NHX1 genes encode amiloride sensitive electroneutral Na(+)/H(+) exchangers.</title>
        <authorList>
            <person name="Darley C.P."/>
            <person name="van Wuytswinkel O.C.M."/>
            <person name="van der Woude K."/>
            <person name="Mager W.H."/>
            <person name="de Boer A.H."/>
        </authorList>
    </citation>
    <scope>FUNCTION</scope>
    <scope>REGULATION</scope>
</reference>
<reference key="9">
    <citation type="journal article" date="2001" name="Proc. Natl. Acad. Sci. U.S.A.">
        <title>Engineering salt-tolerant Brassica plants: characterization of yield and seed oil quality in transgenic plants with increased vacuolar sodium accumulation.</title>
        <authorList>
            <person name="Zhang H.-X."/>
            <person name="Hodson J.N."/>
            <person name="Williams J.P."/>
            <person name="Blumwald E."/>
        </authorList>
    </citation>
    <scope>FUNCTION</scope>
    <scope>BIOTECHNOLOGICAL RELEVANCE</scope>
</reference>
<reference key="10">
    <citation type="journal article" date="2002" name="J. Biol. Chem.">
        <title>The Arabidopsis Na(+)/H(+) exchanger AtNHX1 catalyzes low affinity Na(+) and K(+) transport in reconstituted liposomes.</title>
        <authorList>
            <person name="Venema K."/>
            <person name="Quintero F.J."/>
            <person name="Pardo J.M."/>
            <person name="Donaire J.P."/>
        </authorList>
    </citation>
    <scope>FUNCTION</scope>
    <scope>REGULATION</scope>
</reference>
<reference key="11">
    <citation type="journal article" date="2002" name="Plant J.">
        <title>Differential expression and function of Arabidopsis thaliana NHX Na(+)/H(+) antiporters in the salt stress response.</title>
        <authorList>
            <person name="Yokoi S."/>
            <person name="Quintero F.J."/>
            <person name="Cubero B."/>
            <person name="Ruiz M.T."/>
            <person name="Bressan R.A."/>
            <person name="Hasegawa P.M."/>
            <person name="Pardo J.M."/>
        </authorList>
    </citation>
    <scope>TISSUE SPECIFICITY</scope>
    <scope>INDUCTION</scope>
</reference>
<reference key="12">
    <citation type="journal article" date="2002" name="Plant Mol. Biol.">
        <title>Regulation of expression of the vacuolar Na(+)/H(+) antiporter gene AtNHX1 by salt stress and abscisic acid.</title>
        <authorList>
            <person name="Shi H."/>
            <person name="Zhu J.-K."/>
        </authorList>
    </citation>
    <scope>TISSUE SPECIFICITY</scope>
    <scope>DEVELOPMENTAL STAGE</scope>
    <scope>INDUCTION</scope>
</reference>
<reference key="13">
    <citation type="journal article" date="2003" name="Plant J.">
        <title>Vacuolar cation/H(+) exchange, ion homeostasis, and leaf development are altered in a T-DNA insertional mutant of AtNHX1, the Arabidopsis vacuolar Na(+)/H(+) antiporter.</title>
        <authorList>
            <person name="Apse M.P."/>
            <person name="Sottosanto J.B."/>
            <person name="Blumwald E."/>
        </authorList>
    </citation>
    <scope>FUNCTION</scope>
    <scope>DEVELOPMENTAL STAGE</scope>
    <scope>TISSUE SPECIFICITY</scope>
</reference>
<reference key="14">
    <citation type="journal article" date="2003" name="Proc. Natl. Acad. Sci. U.S.A.">
        <title>Topological analysis of a plant vacuolar Na(+)/H(+) antiporter reveals a luminal C-terminus that regulates antiporter cation selectivity.</title>
        <authorList>
            <person name="Yamaguchi T."/>
            <person name="Apse M.P."/>
            <person name="Shi H."/>
            <person name="Blumwald E."/>
        </authorList>
    </citation>
    <scope>TOPOLOGY</scope>
    <scope>BIOPHYSICOCHEMICAL PROPERTIES</scope>
</reference>
<reference key="15">
    <citation type="journal article" date="2005" name="Plant Cell Physiol.">
        <title>Expression of an Arabidopsis vacuolar sodium/proton antiporter gene in cotton improves photosynthetic performance under salt conditions and increases fiber yield in the field.</title>
        <authorList>
            <person name="He C."/>
            <person name="Yan J."/>
            <person name="Shen G."/>
            <person name="Fu L."/>
            <person name="Holaday A.S."/>
            <person name="Auld D."/>
            <person name="Blumwald E."/>
            <person name="Zhang H.-X."/>
        </authorList>
    </citation>
    <scope>FUNCTION</scope>
    <scope>BIOTECHNOLOGICAL RELEVANCE</scope>
</reference>
<reference key="16">
    <citation type="journal article" date="2005" name="Proc. Natl. Acad. Sci. U.S.A.">
        <title>Vacuolar Na(+)/H(+) antiporter cation selectivity is regulated by calmodulin from within the vacuole in a Ca2(+)- and pH-dependent manner.</title>
        <authorList>
            <person name="Yamaguchi T."/>
            <person name="Aharon G.S."/>
            <person name="Sottosanto J.B."/>
            <person name="Blumwald E."/>
        </authorList>
    </citation>
    <scope>INTERACTION WITH CML18/CAM15</scope>
    <scope>BIOPHYSICOCHEMICAL PROPERTIES</scope>
    <scope>REGULATION</scope>
</reference>
<reference key="17">
    <citation type="journal article" date="2009" name="Plant Physiol.">
        <title>Large-scale Arabidopsis phosphoproteome profiling reveals novel chloroplast kinase substrates and phosphorylation networks.</title>
        <authorList>
            <person name="Reiland S."/>
            <person name="Messerli G."/>
            <person name="Baerenfaller K."/>
            <person name="Gerrits B."/>
            <person name="Endler A."/>
            <person name="Grossmann J."/>
            <person name="Gruissem W."/>
            <person name="Baginsky S."/>
        </authorList>
    </citation>
    <scope>IDENTIFICATION BY MASS SPECTROMETRY [LARGE SCALE ANALYSIS]</scope>
</reference>
<proteinExistence type="evidence at protein level"/>